<comment type="function">
    <text evidence="1">Produces ATP from ADP in the presence of a proton gradient across the membrane. The alpha chain is a regulatory subunit.</text>
</comment>
<comment type="catalytic activity">
    <reaction evidence="1">
        <text>ATP + H2O + 4 H(+)(in) = ADP + phosphate + 5 H(+)(out)</text>
        <dbReference type="Rhea" id="RHEA:57720"/>
        <dbReference type="ChEBI" id="CHEBI:15377"/>
        <dbReference type="ChEBI" id="CHEBI:15378"/>
        <dbReference type="ChEBI" id="CHEBI:30616"/>
        <dbReference type="ChEBI" id="CHEBI:43474"/>
        <dbReference type="ChEBI" id="CHEBI:456216"/>
        <dbReference type="EC" id="7.1.2.2"/>
    </reaction>
</comment>
<comment type="subunit">
    <text evidence="1">F-type ATPases have 2 components, CF(1) - the catalytic core - and CF(0) - the membrane proton channel. CF(1) has five subunits: alpha(3), beta(3), gamma(1), delta(1), epsilon(1). CF(0) has three main subunits: a(1), b(2) and c(9-12). The alpha and beta chains form an alternating ring which encloses part of the gamma chain. CF(1) is attached to CF(0) by a central stalk formed by the gamma and epsilon chains, while a peripheral stalk is formed by the delta and b chains.</text>
</comment>
<comment type="subcellular location">
    <subcellularLocation>
        <location evidence="1">Cell membrane</location>
        <topology evidence="1">Peripheral membrane protein</topology>
    </subcellularLocation>
</comment>
<comment type="similarity">
    <text evidence="1">Belongs to the ATPase alpha/beta chains family.</text>
</comment>
<keyword id="KW-0066">ATP synthesis</keyword>
<keyword id="KW-0067">ATP-binding</keyword>
<keyword id="KW-1003">Cell membrane</keyword>
<keyword id="KW-0139">CF(1)</keyword>
<keyword id="KW-0375">Hydrogen ion transport</keyword>
<keyword id="KW-0406">Ion transport</keyword>
<keyword id="KW-0472">Membrane</keyword>
<keyword id="KW-0547">Nucleotide-binding</keyword>
<keyword id="KW-1278">Translocase</keyword>
<keyword id="KW-0813">Transport</keyword>
<evidence type="ECO:0000255" key="1">
    <source>
        <dbReference type="HAMAP-Rule" id="MF_01346"/>
    </source>
</evidence>
<evidence type="ECO:0000256" key="2">
    <source>
        <dbReference type="SAM" id="MobiDB-lite"/>
    </source>
</evidence>
<feature type="chain" id="PRO_1000143342" description="ATP synthase subunit alpha">
    <location>
        <begin position="1"/>
        <end position="502"/>
    </location>
</feature>
<feature type="region of interest" description="Disordered" evidence="2">
    <location>
        <begin position="115"/>
        <end position="135"/>
    </location>
</feature>
<feature type="binding site" evidence="1">
    <location>
        <begin position="169"/>
        <end position="176"/>
    </location>
    <ligand>
        <name>ATP</name>
        <dbReference type="ChEBI" id="CHEBI:30616"/>
    </ligand>
</feature>
<feature type="site" description="Required for activity" evidence="1">
    <location>
        <position position="362"/>
    </location>
</feature>
<name>ATPA_BACC2</name>
<gene>
    <name evidence="1" type="primary">atpA</name>
    <name type="ordered locus">BCG9842_B5522</name>
</gene>
<protein>
    <recommendedName>
        <fullName evidence="1">ATP synthase subunit alpha</fullName>
        <ecNumber evidence="1">7.1.2.2</ecNumber>
    </recommendedName>
    <alternativeName>
        <fullName evidence="1">ATP synthase F1 sector subunit alpha</fullName>
    </alternativeName>
    <alternativeName>
        <fullName evidence="1">F-ATPase subunit alpha</fullName>
    </alternativeName>
</protein>
<sequence length="502" mass="54671">MSIRAEEISALIKQQIENYQSEIEVSDVGTVIQVGDGIARAHGLDNVMAGELVEFSNGVMGLAQNLEENNVGIIILGPYTEIREGDEVRRTGRIMQVPVGKELIGRVVNPLGQPVDGLGPINTTNTRPIESPAPGVMDRKSVHEPLQTGIKAIDALVPIGRGQRELIIGDRQTGKTAVALDTIINQKDEDMICIYVAIGQKESTVRNVVETLRKHGALEYTIVVTASASQPAPLLYLAPYAGVTMGEEFMYNGKHVLVVYDDLSKQAAAYRELSLLLRRPPGREAYPGDVFYLHSRLLERAAKLSDARGGGSLTALPFIETQAGDVSAYIPTNVISITDGQIFLQSDLFFSGVRPAIDAGTSVSRVGGSAQIKAMSKVSGTLRLDLASYRELEAFAQFGSDLDKATQAKLNRGARTVEVLKQGLHKPLRVEKQVIILYALTRGFLDDIPVVDITRFEEEFHAWLDSNATDLLEEIRTTKKLADDDKFAAAINGFKKVFVASE</sequence>
<accession>B7IQW0</accession>
<organism>
    <name type="scientific">Bacillus cereus (strain G9842)</name>
    <dbReference type="NCBI Taxonomy" id="405531"/>
    <lineage>
        <taxon>Bacteria</taxon>
        <taxon>Bacillati</taxon>
        <taxon>Bacillota</taxon>
        <taxon>Bacilli</taxon>
        <taxon>Bacillales</taxon>
        <taxon>Bacillaceae</taxon>
        <taxon>Bacillus</taxon>
        <taxon>Bacillus cereus group</taxon>
    </lineage>
</organism>
<reference key="1">
    <citation type="submission" date="2008-10" db="EMBL/GenBank/DDBJ databases">
        <title>Genome sequence of Bacillus cereus G9842.</title>
        <authorList>
            <person name="Dodson R.J."/>
            <person name="Durkin A.S."/>
            <person name="Rosovitz M.J."/>
            <person name="Rasko D.A."/>
            <person name="Hoffmaster A."/>
            <person name="Ravel J."/>
            <person name="Sutton G."/>
        </authorList>
    </citation>
    <scope>NUCLEOTIDE SEQUENCE [LARGE SCALE GENOMIC DNA]</scope>
    <source>
        <strain>G9842</strain>
    </source>
</reference>
<proteinExistence type="inferred from homology"/>
<dbReference type="EC" id="7.1.2.2" evidence="1"/>
<dbReference type="EMBL" id="CP001186">
    <property type="protein sequence ID" value="ACK96247.1"/>
    <property type="molecule type" value="Genomic_DNA"/>
</dbReference>
<dbReference type="RefSeq" id="WP_000027521.1">
    <property type="nucleotide sequence ID" value="NC_011772.1"/>
</dbReference>
<dbReference type="SMR" id="B7IQW0"/>
<dbReference type="GeneID" id="83638995"/>
<dbReference type="KEGG" id="bcg:BCG9842_B5522"/>
<dbReference type="HOGENOM" id="CLU_010091_2_1_9"/>
<dbReference type="Proteomes" id="UP000006744">
    <property type="component" value="Chromosome"/>
</dbReference>
<dbReference type="GO" id="GO:0005886">
    <property type="term" value="C:plasma membrane"/>
    <property type="evidence" value="ECO:0007669"/>
    <property type="project" value="UniProtKB-SubCell"/>
</dbReference>
<dbReference type="GO" id="GO:0045259">
    <property type="term" value="C:proton-transporting ATP synthase complex"/>
    <property type="evidence" value="ECO:0007669"/>
    <property type="project" value="UniProtKB-KW"/>
</dbReference>
<dbReference type="GO" id="GO:0043531">
    <property type="term" value="F:ADP binding"/>
    <property type="evidence" value="ECO:0007669"/>
    <property type="project" value="TreeGrafter"/>
</dbReference>
<dbReference type="GO" id="GO:0005524">
    <property type="term" value="F:ATP binding"/>
    <property type="evidence" value="ECO:0007669"/>
    <property type="project" value="UniProtKB-UniRule"/>
</dbReference>
<dbReference type="GO" id="GO:0046933">
    <property type="term" value="F:proton-transporting ATP synthase activity, rotational mechanism"/>
    <property type="evidence" value="ECO:0007669"/>
    <property type="project" value="UniProtKB-UniRule"/>
</dbReference>
<dbReference type="CDD" id="cd18113">
    <property type="entry name" value="ATP-synt_F1_alpha_C"/>
    <property type="match status" value="1"/>
</dbReference>
<dbReference type="CDD" id="cd18116">
    <property type="entry name" value="ATP-synt_F1_alpha_N"/>
    <property type="match status" value="1"/>
</dbReference>
<dbReference type="CDD" id="cd01132">
    <property type="entry name" value="F1-ATPase_alpha_CD"/>
    <property type="match status" value="1"/>
</dbReference>
<dbReference type="FunFam" id="1.20.150.20:FF:000001">
    <property type="entry name" value="ATP synthase subunit alpha"/>
    <property type="match status" value="1"/>
</dbReference>
<dbReference type="FunFam" id="2.40.30.20:FF:000001">
    <property type="entry name" value="ATP synthase subunit alpha"/>
    <property type="match status" value="1"/>
</dbReference>
<dbReference type="FunFam" id="3.40.50.300:FF:000002">
    <property type="entry name" value="ATP synthase subunit alpha"/>
    <property type="match status" value="1"/>
</dbReference>
<dbReference type="Gene3D" id="2.40.30.20">
    <property type="match status" value="1"/>
</dbReference>
<dbReference type="Gene3D" id="1.20.150.20">
    <property type="entry name" value="ATP synthase alpha/beta chain, C-terminal domain"/>
    <property type="match status" value="1"/>
</dbReference>
<dbReference type="Gene3D" id="3.40.50.300">
    <property type="entry name" value="P-loop containing nucleotide triphosphate hydrolases"/>
    <property type="match status" value="1"/>
</dbReference>
<dbReference type="HAMAP" id="MF_01346">
    <property type="entry name" value="ATP_synth_alpha_bact"/>
    <property type="match status" value="1"/>
</dbReference>
<dbReference type="InterPro" id="IPR023366">
    <property type="entry name" value="ATP_synth_asu-like_sf"/>
</dbReference>
<dbReference type="InterPro" id="IPR000793">
    <property type="entry name" value="ATP_synth_asu_C"/>
</dbReference>
<dbReference type="InterPro" id="IPR038376">
    <property type="entry name" value="ATP_synth_asu_C_sf"/>
</dbReference>
<dbReference type="InterPro" id="IPR033732">
    <property type="entry name" value="ATP_synth_F1_a_nt-bd_dom"/>
</dbReference>
<dbReference type="InterPro" id="IPR005294">
    <property type="entry name" value="ATP_synth_F1_asu"/>
</dbReference>
<dbReference type="InterPro" id="IPR020003">
    <property type="entry name" value="ATPase_a/bsu_AS"/>
</dbReference>
<dbReference type="InterPro" id="IPR004100">
    <property type="entry name" value="ATPase_F1/V1/A1_a/bsu_N"/>
</dbReference>
<dbReference type="InterPro" id="IPR036121">
    <property type="entry name" value="ATPase_F1/V1/A1_a/bsu_N_sf"/>
</dbReference>
<dbReference type="InterPro" id="IPR000194">
    <property type="entry name" value="ATPase_F1/V1/A1_a/bsu_nucl-bd"/>
</dbReference>
<dbReference type="InterPro" id="IPR027417">
    <property type="entry name" value="P-loop_NTPase"/>
</dbReference>
<dbReference type="NCBIfam" id="TIGR00962">
    <property type="entry name" value="atpA"/>
    <property type="match status" value="1"/>
</dbReference>
<dbReference type="NCBIfam" id="NF009884">
    <property type="entry name" value="PRK13343.1"/>
    <property type="match status" value="1"/>
</dbReference>
<dbReference type="PANTHER" id="PTHR48082">
    <property type="entry name" value="ATP SYNTHASE SUBUNIT ALPHA, MITOCHONDRIAL"/>
    <property type="match status" value="1"/>
</dbReference>
<dbReference type="PANTHER" id="PTHR48082:SF2">
    <property type="entry name" value="ATP SYNTHASE SUBUNIT ALPHA, MITOCHONDRIAL"/>
    <property type="match status" value="1"/>
</dbReference>
<dbReference type="Pfam" id="PF00006">
    <property type="entry name" value="ATP-synt_ab"/>
    <property type="match status" value="1"/>
</dbReference>
<dbReference type="Pfam" id="PF00306">
    <property type="entry name" value="ATP-synt_ab_C"/>
    <property type="match status" value="1"/>
</dbReference>
<dbReference type="Pfam" id="PF02874">
    <property type="entry name" value="ATP-synt_ab_N"/>
    <property type="match status" value="1"/>
</dbReference>
<dbReference type="PIRSF" id="PIRSF039088">
    <property type="entry name" value="F_ATPase_subunit_alpha"/>
    <property type="match status" value="1"/>
</dbReference>
<dbReference type="SUPFAM" id="SSF47917">
    <property type="entry name" value="C-terminal domain of alpha and beta subunits of F1 ATP synthase"/>
    <property type="match status" value="1"/>
</dbReference>
<dbReference type="SUPFAM" id="SSF50615">
    <property type="entry name" value="N-terminal domain of alpha and beta subunits of F1 ATP synthase"/>
    <property type="match status" value="1"/>
</dbReference>
<dbReference type="SUPFAM" id="SSF52540">
    <property type="entry name" value="P-loop containing nucleoside triphosphate hydrolases"/>
    <property type="match status" value="1"/>
</dbReference>
<dbReference type="PROSITE" id="PS00152">
    <property type="entry name" value="ATPASE_ALPHA_BETA"/>
    <property type="match status" value="1"/>
</dbReference>